<protein>
    <recommendedName>
        <fullName evidence="1">Ubiquinone biosynthesis O-methyltransferase</fullName>
    </recommendedName>
    <alternativeName>
        <fullName evidence="1">2-polyprenyl-6-hydroxyphenol methylase</fullName>
        <ecNumber evidence="1">2.1.1.222</ecNumber>
    </alternativeName>
    <alternativeName>
        <fullName evidence="1">3-demethylubiquinone 3-O-methyltransferase</fullName>
        <ecNumber evidence="1">2.1.1.64</ecNumber>
    </alternativeName>
</protein>
<keyword id="KW-0489">Methyltransferase</keyword>
<keyword id="KW-1185">Reference proteome</keyword>
<keyword id="KW-0949">S-adenosyl-L-methionine</keyword>
<keyword id="KW-0808">Transferase</keyword>
<keyword id="KW-0831">Ubiquinone biosynthesis</keyword>
<reference key="1">
    <citation type="journal article" date="2006" name="J. Bacteriol.">
        <title>Comparison of the genome sequence of the poultry pathogen Bordetella avium with those of B. bronchiseptica, B. pertussis, and B. parapertussis reveals extensive diversity in surface structures associated with host interaction.</title>
        <authorList>
            <person name="Sebaihia M."/>
            <person name="Preston A."/>
            <person name="Maskell D.J."/>
            <person name="Kuzmiak H."/>
            <person name="Connell T.D."/>
            <person name="King N.D."/>
            <person name="Orndorff P.E."/>
            <person name="Miyamoto D.M."/>
            <person name="Thomson N.R."/>
            <person name="Harris D."/>
            <person name="Goble A."/>
            <person name="Lord A."/>
            <person name="Murphy L."/>
            <person name="Quail M.A."/>
            <person name="Rutter S."/>
            <person name="Squares R."/>
            <person name="Squares S."/>
            <person name="Woodward J."/>
            <person name="Parkhill J."/>
            <person name="Temple L.M."/>
        </authorList>
    </citation>
    <scope>NUCLEOTIDE SEQUENCE [LARGE SCALE GENOMIC DNA]</scope>
    <source>
        <strain>197N</strain>
    </source>
</reference>
<name>UBIG_BORA1</name>
<accession>Q2L2T5</accession>
<gene>
    <name evidence="1" type="primary">ubiG</name>
    <name type="ordered locus">BAV1345</name>
</gene>
<organism>
    <name type="scientific">Bordetella avium (strain 197N)</name>
    <dbReference type="NCBI Taxonomy" id="360910"/>
    <lineage>
        <taxon>Bacteria</taxon>
        <taxon>Pseudomonadati</taxon>
        <taxon>Pseudomonadota</taxon>
        <taxon>Betaproteobacteria</taxon>
        <taxon>Burkholderiales</taxon>
        <taxon>Alcaligenaceae</taxon>
        <taxon>Bordetella</taxon>
    </lineage>
</organism>
<feature type="chain" id="PRO_0000241702" description="Ubiquinone biosynthesis O-methyltransferase">
    <location>
        <begin position="1"/>
        <end position="241"/>
    </location>
</feature>
<feature type="binding site" evidence="1">
    <location>
        <position position="46"/>
    </location>
    <ligand>
        <name>S-adenosyl-L-methionine</name>
        <dbReference type="ChEBI" id="CHEBI:59789"/>
    </ligand>
</feature>
<feature type="binding site" evidence="1">
    <location>
        <position position="66"/>
    </location>
    <ligand>
        <name>S-adenosyl-L-methionine</name>
        <dbReference type="ChEBI" id="CHEBI:59789"/>
    </ligand>
</feature>
<feature type="binding site" evidence="1">
    <location>
        <position position="87"/>
    </location>
    <ligand>
        <name>S-adenosyl-L-methionine</name>
        <dbReference type="ChEBI" id="CHEBI:59789"/>
    </ligand>
</feature>
<feature type="binding site" evidence="1">
    <location>
        <position position="131"/>
    </location>
    <ligand>
        <name>S-adenosyl-L-methionine</name>
        <dbReference type="ChEBI" id="CHEBI:59789"/>
    </ligand>
</feature>
<proteinExistence type="inferred from homology"/>
<sequence length="241" mass="26346">MTTANSASRPNINVDQAELDKFSALAARWWDPESEFKPLHAINPLRLEWIQELAGSLQGRRVLDVGCGGGILSEAMAQAGADVTGIDLAEKSLKIARLHGLESGVKVEYRAVPVEELATEQAGQYDIVTCMEMLEHVPDPNSVVRACAALVKPGGWVFFSTLNRNPKSFLFAIIGAEYVLRLLPRGTHSYEHFIKPSELAASARQAGLEPSGMRGMEYNPITQIYSLSGNTSVNYLMATRK</sequence>
<comment type="function">
    <text evidence="1">O-methyltransferase that catalyzes the 2 O-methylation steps in the ubiquinone biosynthetic pathway.</text>
</comment>
<comment type="catalytic activity">
    <reaction evidence="1">
        <text>a 3-demethylubiquinol + S-adenosyl-L-methionine = a ubiquinol + S-adenosyl-L-homocysteine + H(+)</text>
        <dbReference type="Rhea" id="RHEA:44380"/>
        <dbReference type="Rhea" id="RHEA-COMP:9566"/>
        <dbReference type="Rhea" id="RHEA-COMP:10914"/>
        <dbReference type="ChEBI" id="CHEBI:15378"/>
        <dbReference type="ChEBI" id="CHEBI:17976"/>
        <dbReference type="ChEBI" id="CHEBI:57856"/>
        <dbReference type="ChEBI" id="CHEBI:59789"/>
        <dbReference type="ChEBI" id="CHEBI:84422"/>
        <dbReference type="EC" id="2.1.1.64"/>
    </reaction>
</comment>
<comment type="catalytic activity">
    <reaction evidence="1">
        <text>a 3-(all-trans-polyprenyl)benzene-1,2-diol + S-adenosyl-L-methionine = a 2-methoxy-6-(all-trans-polyprenyl)phenol + S-adenosyl-L-homocysteine + H(+)</text>
        <dbReference type="Rhea" id="RHEA:31411"/>
        <dbReference type="Rhea" id="RHEA-COMP:9550"/>
        <dbReference type="Rhea" id="RHEA-COMP:9551"/>
        <dbReference type="ChEBI" id="CHEBI:15378"/>
        <dbReference type="ChEBI" id="CHEBI:57856"/>
        <dbReference type="ChEBI" id="CHEBI:59789"/>
        <dbReference type="ChEBI" id="CHEBI:62729"/>
        <dbReference type="ChEBI" id="CHEBI:62731"/>
        <dbReference type="EC" id="2.1.1.222"/>
    </reaction>
</comment>
<comment type="pathway">
    <text evidence="1">Cofactor biosynthesis; ubiquinone biosynthesis.</text>
</comment>
<comment type="similarity">
    <text evidence="1">Belongs to the methyltransferase superfamily. UbiG/COQ3 family.</text>
</comment>
<evidence type="ECO:0000255" key="1">
    <source>
        <dbReference type="HAMAP-Rule" id="MF_00472"/>
    </source>
</evidence>
<dbReference type="EC" id="2.1.1.222" evidence="1"/>
<dbReference type="EC" id="2.1.1.64" evidence="1"/>
<dbReference type="EMBL" id="AM167904">
    <property type="protein sequence ID" value="CAJ48954.1"/>
    <property type="molecule type" value="Genomic_DNA"/>
</dbReference>
<dbReference type="RefSeq" id="WP_012417026.1">
    <property type="nucleotide sequence ID" value="NC_010645.1"/>
</dbReference>
<dbReference type="SMR" id="Q2L2T5"/>
<dbReference type="STRING" id="360910.BAV1345"/>
<dbReference type="GeneID" id="92935529"/>
<dbReference type="KEGG" id="bav:BAV1345"/>
<dbReference type="eggNOG" id="COG2227">
    <property type="taxonomic scope" value="Bacteria"/>
</dbReference>
<dbReference type="HOGENOM" id="CLU_042432_5_0_4"/>
<dbReference type="OrthoDB" id="9801538at2"/>
<dbReference type="UniPathway" id="UPA00232"/>
<dbReference type="Proteomes" id="UP000001977">
    <property type="component" value="Chromosome"/>
</dbReference>
<dbReference type="GO" id="GO:0102208">
    <property type="term" value="F:2-polyprenyl-6-hydroxyphenol methylase activity"/>
    <property type="evidence" value="ECO:0007669"/>
    <property type="project" value="UniProtKB-EC"/>
</dbReference>
<dbReference type="GO" id="GO:0061542">
    <property type="term" value="F:3-demethylubiquinol 3-O-methyltransferase activity"/>
    <property type="evidence" value="ECO:0007669"/>
    <property type="project" value="UniProtKB-UniRule"/>
</dbReference>
<dbReference type="GO" id="GO:0010420">
    <property type="term" value="F:polyprenyldihydroxybenzoate methyltransferase activity"/>
    <property type="evidence" value="ECO:0007669"/>
    <property type="project" value="InterPro"/>
</dbReference>
<dbReference type="GO" id="GO:0032259">
    <property type="term" value="P:methylation"/>
    <property type="evidence" value="ECO:0007669"/>
    <property type="project" value="UniProtKB-KW"/>
</dbReference>
<dbReference type="CDD" id="cd02440">
    <property type="entry name" value="AdoMet_MTases"/>
    <property type="match status" value="1"/>
</dbReference>
<dbReference type="FunFam" id="3.40.50.150:FF:000028">
    <property type="entry name" value="Ubiquinone biosynthesis O-methyltransferase"/>
    <property type="match status" value="1"/>
</dbReference>
<dbReference type="Gene3D" id="3.40.50.150">
    <property type="entry name" value="Vaccinia Virus protein VP39"/>
    <property type="match status" value="1"/>
</dbReference>
<dbReference type="HAMAP" id="MF_00472">
    <property type="entry name" value="UbiG"/>
    <property type="match status" value="1"/>
</dbReference>
<dbReference type="InterPro" id="IPR029063">
    <property type="entry name" value="SAM-dependent_MTases_sf"/>
</dbReference>
<dbReference type="InterPro" id="IPR010233">
    <property type="entry name" value="UbiG_MeTrfase"/>
</dbReference>
<dbReference type="NCBIfam" id="TIGR01983">
    <property type="entry name" value="UbiG"/>
    <property type="match status" value="1"/>
</dbReference>
<dbReference type="PANTHER" id="PTHR43464">
    <property type="entry name" value="METHYLTRANSFERASE"/>
    <property type="match status" value="1"/>
</dbReference>
<dbReference type="PANTHER" id="PTHR43464:SF19">
    <property type="entry name" value="UBIQUINONE BIOSYNTHESIS O-METHYLTRANSFERASE, MITOCHONDRIAL"/>
    <property type="match status" value="1"/>
</dbReference>
<dbReference type="Pfam" id="PF13489">
    <property type="entry name" value="Methyltransf_23"/>
    <property type="match status" value="1"/>
</dbReference>
<dbReference type="SUPFAM" id="SSF53335">
    <property type="entry name" value="S-adenosyl-L-methionine-dependent methyltransferases"/>
    <property type="match status" value="1"/>
</dbReference>